<reference key="1">
    <citation type="journal article" date="2005" name="Science">
        <title>The transcriptional landscape of the mammalian genome.</title>
        <authorList>
            <person name="Carninci P."/>
            <person name="Kasukawa T."/>
            <person name="Katayama S."/>
            <person name="Gough J."/>
            <person name="Frith M.C."/>
            <person name="Maeda N."/>
            <person name="Oyama R."/>
            <person name="Ravasi T."/>
            <person name="Lenhard B."/>
            <person name="Wells C."/>
            <person name="Kodzius R."/>
            <person name="Shimokawa K."/>
            <person name="Bajic V.B."/>
            <person name="Brenner S.E."/>
            <person name="Batalov S."/>
            <person name="Forrest A.R."/>
            <person name="Zavolan M."/>
            <person name="Davis M.J."/>
            <person name="Wilming L.G."/>
            <person name="Aidinis V."/>
            <person name="Allen J.E."/>
            <person name="Ambesi-Impiombato A."/>
            <person name="Apweiler R."/>
            <person name="Aturaliya R.N."/>
            <person name="Bailey T.L."/>
            <person name="Bansal M."/>
            <person name="Baxter L."/>
            <person name="Beisel K.W."/>
            <person name="Bersano T."/>
            <person name="Bono H."/>
            <person name="Chalk A.M."/>
            <person name="Chiu K.P."/>
            <person name="Choudhary V."/>
            <person name="Christoffels A."/>
            <person name="Clutterbuck D.R."/>
            <person name="Crowe M.L."/>
            <person name="Dalla E."/>
            <person name="Dalrymple B.P."/>
            <person name="de Bono B."/>
            <person name="Della Gatta G."/>
            <person name="di Bernardo D."/>
            <person name="Down T."/>
            <person name="Engstrom P."/>
            <person name="Fagiolini M."/>
            <person name="Faulkner G."/>
            <person name="Fletcher C.F."/>
            <person name="Fukushima T."/>
            <person name="Furuno M."/>
            <person name="Futaki S."/>
            <person name="Gariboldi M."/>
            <person name="Georgii-Hemming P."/>
            <person name="Gingeras T.R."/>
            <person name="Gojobori T."/>
            <person name="Green R.E."/>
            <person name="Gustincich S."/>
            <person name="Harbers M."/>
            <person name="Hayashi Y."/>
            <person name="Hensch T.K."/>
            <person name="Hirokawa N."/>
            <person name="Hill D."/>
            <person name="Huminiecki L."/>
            <person name="Iacono M."/>
            <person name="Ikeo K."/>
            <person name="Iwama A."/>
            <person name="Ishikawa T."/>
            <person name="Jakt M."/>
            <person name="Kanapin A."/>
            <person name="Katoh M."/>
            <person name="Kawasawa Y."/>
            <person name="Kelso J."/>
            <person name="Kitamura H."/>
            <person name="Kitano H."/>
            <person name="Kollias G."/>
            <person name="Krishnan S.P."/>
            <person name="Kruger A."/>
            <person name="Kummerfeld S.K."/>
            <person name="Kurochkin I.V."/>
            <person name="Lareau L.F."/>
            <person name="Lazarevic D."/>
            <person name="Lipovich L."/>
            <person name="Liu J."/>
            <person name="Liuni S."/>
            <person name="McWilliam S."/>
            <person name="Madan Babu M."/>
            <person name="Madera M."/>
            <person name="Marchionni L."/>
            <person name="Matsuda H."/>
            <person name="Matsuzawa S."/>
            <person name="Miki H."/>
            <person name="Mignone F."/>
            <person name="Miyake S."/>
            <person name="Morris K."/>
            <person name="Mottagui-Tabar S."/>
            <person name="Mulder N."/>
            <person name="Nakano N."/>
            <person name="Nakauchi H."/>
            <person name="Ng P."/>
            <person name="Nilsson R."/>
            <person name="Nishiguchi S."/>
            <person name="Nishikawa S."/>
            <person name="Nori F."/>
            <person name="Ohara O."/>
            <person name="Okazaki Y."/>
            <person name="Orlando V."/>
            <person name="Pang K.C."/>
            <person name="Pavan W.J."/>
            <person name="Pavesi G."/>
            <person name="Pesole G."/>
            <person name="Petrovsky N."/>
            <person name="Piazza S."/>
            <person name="Reed J."/>
            <person name="Reid J.F."/>
            <person name="Ring B.Z."/>
            <person name="Ringwald M."/>
            <person name="Rost B."/>
            <person name="Ruan Y."/>
            <person name="Salzberg S.L."/>
            <person name="Sandelin A."/>
            <person name="Schneider C."/>
            <person name="Schoenbach C."/>
            <person name="Sekiguchi K."/>
            <person name="Semple C.A."/>
            <person name="Seno S."/>
            <person name="Sessa L."/>
            <person name="Sheng Y."/>
            <person name="Shibata Y."/>
            <person name="Shimada H."/>
            <person name="Shimada K."/>
            <person name="Silva D."/>
            <person name="Sinclair B."/>
            <person name="Sperling S."/>
            <person name="Stupka E."/>
            <person name="Sugiura K."/>
            <person name="Sultana R."/>
            <person name="Takenaka Y."/>
            <person name="Taki K."/>
            <person name="Tammoja K."/>
            <person name="Tan S.L."/>
            <person name="Tang S."/>
            <person name="Taylor M.S."/>
            <person name="Tegner J."/>
            <person name="Teichmann S.A."/>
            <person name="Ueda H.R."/>
            <person name="van Nimwegen E."/>
            <person name="Verardo R."/>
            <person name="Wei C.L."/>
            <person name="Yagi K."/>
            <person name="Yamanishi H."/>
            <person name="Zabarovsky E."/>
            <person name="Zhu S."/>
            <person name="Zimmer A."/>
            <person name="Hide W."/>
            <person name="Bult C."/>
            <person name="Grimmond S.M."/>
            <person name="Teasdale R.D."/>
            <person name="Liu E.T."/>
            <person name="Brusic V."/>
            <person name="Quackenbush J."/>
            <person name="Wahlestedt C."/>
            <person name="Mattick J.S."/>
            <person name="Hume D.A."/>
            <person name="Kai C."/>
            <person name="Sasaki D."/>
            <person name="Tomaru Y."/>
            <person name="Fukuda S."/>
            <person name="Kanamori-Katayama M."/>
            <person name="Suzuki M."/>
            <person name="Aoki J."/>
            <person name="Arakawa T."/>
            <person name="Iida J."/>
            <person name="Imamura K."/>
            <person name="Itoh M."/>
            <person name="Kato T."/>
            <person name="Kawaji H."/>
            <person name="Kawagashira N."/>
            <person name="Kawashima T."/>
            <person name="Kojima M."/>
            <person name="Kondo S."/>
            <person name="Konno H."/>
            <person name="Nakano K."/>
            <person name="Ninomiya N."/>
            <person name="Nishio T."/>
            <person name="Okada M."/>
            <person name="Plessy C."/>
            <person name="Shibata K."/>
            <person name="Shiraki T."/>
            <person name="Suzuki S."/>
            <person name="Tagami M."/>
            <person name="Waki K."/>
            <person name="Watahiki A."/>
            <person name="Okamura-Oho Y."/>
            <person name="Suzuki H."/>
            <person name="Kawai J."/>
            <person name="Hayashizaki Y."/>
        </authorList>
    </citation>
    <scope>NUCLEOTIDE SEQUENCE [LARGE SCALE MRNA]</scope>
    <source>
        <strain>C57BL/6J</strain>
        <tissue>Head</tissue>
        <tissue>Skin</tissue>
    </source>
</reference>
<reference key="2">
    <citation type="journal article" date="2004" name="Genome Res.">
        <title>The status, quality, and expansion of the NIH full-length cDNA project: the Mammalian Gene Collection (MGC).</title>
        <authorList>
            <consortium name="The MGC Project Team"/>
        </authorList>
    </citation>
    <scope>NUCLEOTIDE SEQUENCE [LARGE SCALE MRNA]</scope>
</reference>
<reference key="3">
    <citation type="journal article" date="2011" name="Invest. Ophthalmol. Vis. Sci.">
        <title>Juvenile cataract-associated mutation of solute carrier SLC16A12 impairs trafficking of the protein to the plasma membrane.</title>
        <authorList>
            <person name="Castorino J.J."/>
            <person name="Gallagher-Colombo S.M."/>
            <person name="Levin A.V."/>
            <person name="Fitzgerald P.G."/>
            <person name="Polishook J."/>
            <person name="Kloeckener-Gruissem B."/>
            <person name="Ostertag E."/>
            <person name="Philp N.J."/>
        </authorList>
    </citation>
    <scope>TISSUE SPECIFICITY</scope>
    <scope>DEVELOPMENTAL STAGE</scope>
</reference>
<reference key="4">
    <citation type="journal article" date="2016" name="J. Am. Soc. Nephrol.">
        <title>Mutation in the monocarboxylate transporter 12 gene affects guanidinoacetate excretion but does not cause glucosuria.</title>
        <authorList>
            <person name="Dhayat N."/>
            <person name="Simonin A."/>
            <person name="Anderegg M."/>
            <person name="Pathare G."/>
            <person name="Luescher B.P."/>
            <person name="Deisl C."/>
            <person name="Albano G."/>
            <person name="Mordasini D."/>
            <person name="Hediger M.A."/>
            <person name="Surbek D.V."/>
            <person name="Vogt B."/>
            <person name="Sass J.O."/>
            <person name="Kloeckener-Gruissem B."/>
            <person name="Fuster D.G."/>
        </authorList>
    </citation>
    <scope>SUBCELLULAR LOCATION</scope>
    <scope>TISSUE SPECIFICITY</scope>
</reference>
<dbReference type="EMBL" id="AK028284">
    <property type="protein sequence ID" value="BAC25857.1"/>
    <property type="molecule type" value="mRNA"/>
</dbReference>
<dbReference type="EMBL" id="AK029076">
    <property type="protein sequence ID" value="BAC26279.1"/>
    <property type="molecule type" value="mRNA"/>
</dbReference>
<dbReference type="EMBL" id="BC111902">
    <property type="protein sequence ID" value="AAI11903.1"/>
    <property type="molecule type" value="mRNA"/>
</dbReference>
<dbReference type="EMBL" id="BC113803">
    <property type="protein sequence ID" value="AAI13804.1"/>
    <property type="molecule type" value="mRNA"/>
</dbReference>
<dbReference type="CCDS" id="CCDS29767.1"/>
<dbReference type="RefSeq" id="NP_766426.1">
    <property type="nucleotide sequence ID" value="NM_172838.4"/>
</dbReference>
<dbReference type="RefSeq" id="XP_006527141.1">
    <property type="nucleotide sequence ID" value="XM_006527078.5"/>
</dbReference>
<dbReference type="RefSeq" id="XP_011245548.1">
    <property type="nucleotide sequence ID" value="XM_011247246.3"/>
</dbReference>
<dbReference type="SMR" id="Q8BGC3"/>
<dbReference type="BioGRID" id="232216">
    <property type="interactions" value="1"/>
</dbReference>
<dbReference type="FunCoup" id="Q8BGC3">
    <property type="interactions" value="138"/>
</dbReference>
<dbReference type="STRING" id="10090.ENSMUSP00000009522"/>
<dbReference type="iPTMnet" id="Q8BGC3"/>
<dbReference type="PhosphoSitePlus" id="Q8BGC3"/>
<dbReference type="PaxDb" id="10090-ENSMUSP00000009522"/>
<dbReference type="PeptideAtlas" id="Q8BGC3"/>
<dbReference type="ProteomicsDB" id="252595"/>
<dbReference type="Antibodypedia" id="16234">
    <property type="antibodies" value="120 antibodies from 24 providers"/>
</dbReference>
<dbReference type="DNASU" id="240638"/>
<dbReference type="Ensembl" id="ENSMUST00000009522.4">
    <property type="protein sequence ID" value="ENSMUSP00000009522.4"/>
    <property type="gene ID" value="ENSMUSG00000009378.5"/>
</dbReference>
<dbReference type="GeneID" id="240638"/>
<dbReference type="KEGG" id="mmu:240638"/>
<dbReference type="UCSC" id="uc008hgu.1">
    <property type="organism name" value="mouse"/>
</dbReference>
<dbReference type="AGR" id="MGI:2147716"/>
<dbReference type="CTD" id="387700"/>
<dbReference type="MGI" id="MGI:2147716">
    <property type="gene designation" value="Slc16a12"/>
</dbReference>
<dbReference type="VEuPathDB" id="HostDB:ENSMUSG00000009378"/>
<dbReference type="eggNOG" id="KOG2504">
    <property type="taxonomic scope" value="Eukaryota"/>
</dbReference>
<dbReference type="GeneTree" id="ENSGT00940000156169"/>
<dbReference type="HOGENOM" id="CLU_001265_59_1_1"/>
<dbReference type="InParanoid" id="Q8BGC3"/>
<dbReference type="OMA" id="WVLASHQ"/>
<dbReference type="OrthoDB" id="410267at2759"/>
<dbReference type="PhylomeDB" id="Q8BGC3"/>
<dbReference type="TreeFam" id="TF313792"/>
<dbReference type="BioGRID-ORCS" id="240638">
    <property type="hits" value="2 hits in 78 CRISPR screens"/>
</dbReference>
<dbReference type="ChiTaRS" id="Slc16a12">
    <property type="organism name" value="mouse"/>
</dbReference>
<dbReference type="PRO" id="PR:Q8BGC3"/>
<dbReference type="Proteomes" id="UP000000589">
    <property type="component" value="Chromosome 19"/>
</dbReference>
<dbReference type="RNAct" id="Q8BGC3">
    <property type="molecule type" value="protein"/>
</dbReference>
<dbReference type="Bgee" id="ENSMUSG00000009378">
    <property type="expression patterns" value="Expressed in urinary bladder urothelium and 179 other cell types or tissues"/>
</dbReference>
<dbReference type="GO" id="GO:0016323">
    <property type="term" value="C:basolateral plasma membrane"/>
    <property type="evidence" value="ECO:0000314"/>
    <property type="project" value="ARUK-UCL"/>
</dbReference>
<dbReference type="GO" id="GO:0005886">
    <property type="term" value="C:plasma membrane"/>
    <property type="evidence" value="ECO:0000250"/>
    <property type="project" value="UniProtKB"/>
</dbReference>
<dbReference type="GO" id="GO:0005308">
    <property type="term" value="F:creatine transmembrane transporter activity"/>
    <property type="evidence" value="ECO:0000250"/>
    <property type="project" value="UniProtKB"/>
</dbReference>
<dbReference type="GO" id="GO:0015292">
    <property type="term" value="F:uniporter activity"/>
    <property type="evidence" value="ECO:0000250"/>
    <property type="project" value="UniProtKB"/>
</dbReference>
<dbReference type="GO" id="GO:0015881">
    <property type="term" value="P:creatine transmembrane transport"/>
    <property type="evidence" value="ECO:0000250"/>
    <property type="project" value="UniProtKB"/>
</dbReference>
<dbReference type="GO" id="GO:0046449">
    <property type="term" value="P:creatinine metabolic process"/>
    <property type="evidence" value="ECO:0007669"/>
    <property type="project" value="Ensembl"/>
</dbReference>
<dbReference type="CDD" id="cd17424">
    <property type="entry name" value="MFS_MCT12"/>
    <property type="match status" value="1"/>
</dbReference>
<dbReference type="FunFam" id="1.20.1250.20:FF:000128">
    <property type="entry name" value="monocarboxylate transporter 12 isoform X1"/>
    <property type="match status" value="1"/>
</dbReference>
<dbReference type="FunFam" id="1.20.1250.20:FF:000160">
    <property type="entry name" value="monocarboxylate transporter 12 isoform X1"/>
    <property type="match status" value="1"/>
</dbReference>
<dbReference type="Gene3D" id="1.20.1250.20">
    <property type="entry name" value="MFS general substrate transporter like domains"/>
    <property type="match status" value="2"/>
</dbReference>
<dbReference type="InterPro" id="IPR011701">
    <property type="entry name" value="MFS"/>
</dbReference>
<dbReference type="InterPro" id="IPR020846">
    <property type="entry name" value="MFS_dom"/>
</dbReference>
<dbReference type="InterPro" id="IPR036259">
    <property type="entry name" value="MFS_trans_sf"/>
</dbReference>
<dbReference type="InterPro" id="IPR050327">
    <property type="entry name" value="Proton-linked_MCT"/>
</dbReference>
<dbReference type="PANTHER" id="PTHR11360">
    <property type="entry name" value="MONOCARBOXYLATE TRANSPORTER"/>
    <property type="match status" value="1"/>
</dbReference>
<dbReference type="PANTHER" id="PTHR11360:SF318">
    <property type="entry name" value="MONOCARBOXYLATE TRANSPORTER 12"/>
    <property type="match status" value="1"/>
</dbReference>
<dbReference type="Pfam" id="PF07690">
    <property type="entry name" value="MFS_1"/>
    <property type="match status" value="1"/>
</dbReference>
<dbReference type="SUPFAM" id="SSF103473">
    <property type="entry name" value="MFS general substrate transporter"/>
    <property type="match status" value="1"/>
</dbReference>
<dbReference type="PROSITE" id="PS50850">
    <property type="entry name" value="MFS"/>
    <property type="match status" value="1"/>
</dbReference>
<sequence length="486" mass="53152">MTKITRVSLASPPDGGWGWMIVAGCFLVTICTRAVTRCISIFFVEFQTYFAQDYSQTAWIHSIVDCMTMLCAPLGSVVSNQLSCQAGIMLGGLLASTGFILGSFATSLKHLYLSLGVLTGLGFALCYSPAIAMVGKYFSRRKALAYGIAMSGSGIGTFILAPVVQLLIEQFSWRGALLILGGFVLNLCVCGALMRPITLKEDRSVPEKNHNRESQREDCKQASPYSPLTKECTETRLCCSLQQEYGFLLMSDFVVLAVSVLFMAYGCSPLFVYLVPYALSVGVSHHQAAFLMSILGVIDIVGNITFGWLTDRRCLKNYRYVCYLFAVALDGLCYLCLPMLQTFPLLVPFSCTFGYFDGAYVTLIPVVTAEIVGTTSLSSALGVVYFLHAVPYLVSPPIAGWLVDTTGSYTAAFLLCGFAMIFSSILLGFVRIVKRMKRTQVPFPVKDSDPKLQLWTNGSVAYSVARELDQKDEEPLPKARSGCNLT</sequence>
<protein>
    <recommendedName>
        <fullName evidence="6">Monocarboxylate transporter 12</fullName>
        <shortName evidence="6">MCT 12</shortName>
    </recommendedName>
    <alternativeName>
        <fullName evidence="7">Solute carrier family 16 member 12</fullName>
    </alternativeName>
</protein>
<evidence type="ECO:0000250" key="1">
    <source>
        <dbReference type="UniProtKB" id="Q6ZSM3"/>
    </source>
</evidence>
<evidence type="ECO:0000255" key="2"/>
<evidence type="ECO:0000269" key="3">
    <source>
    </source>
</evidence>
<evidence type="ECO:0000269" key="4">
    <source>
    </source>
</evidence>
<evidence type="ECO:0000303" key="5">
    <source>
    </source>
</evidence>
<evidence type="ECO:0000305" key="6"/>
<evidence type="ECO:0000312" key="7">
    <source>
        <dbReference type="MGI" id="MGI:2147716"/>
    </source>
</evidence>
<gene>
    <name evidence="7" type="primary">Slc16a12</name>
    <name evidence="5" type="synonym">Mct12</name>
</gene>
<keyword id="KW-1003">Cell membrane</keyword>
<keyword id="KW-0472">Membrane</keyword>
<keyword id="KW-1185">Reference proteome</keyword>
<keyword id="KW-0812">Transmembrane</keyword>
<keyword id="KW-1133">Transmembrane helix</keyword>
<name>MOT12_MOUSE</name>
<comment type="function">
    <text evidence="1">Functions as a transporter for creatine and as well for its precursor guanidinoacetate. Transport of creatine and GAA is independent of resting membrane potential and extracellular Na(+), Cl(-), or pH. Contributes to the process of creatine biosynthesis and distribution.</text>
</comment>
<comment type="catalytic activity">
    <reaction evidence="1">
        <text>creatine(in) = creatine(out)</text>
        <dbReference type="Rhea" id="RHEA:73043"/>
        <dbReference type="ChEBI" id="CHEBI:57947"/>
    </reaction>
</comment>
<comment type="catalytic activity">
    <reaction evidence="1">
        <text>guanidinoacetate(in) = guanidinoacetate(out)</text>
        <dbReference type="Rhea" id="RHEA:73047"/>
        <dbReference type="ChEBI" id="CHEBI:57742"/>
    </reaction>
</comment>
<comment type="activity regulation">
    <text evidence="1">Creatine uptake is inhibited by carbonyl cyanide 3-chlorophenylhydrazone (CCCP) and by valinomycin.</text>
</comment>
<comment type="subunit">
    <text evidence="1">Interacts with isoform 2 of BSG; this interaction is required for its localization to the plasma membrane.</text>
</comment>
<comment type="subcellular location">
    <subcellularLocation>
        <location evidence="1">Cell membrane</location>
        <topology evidence="2">Multi-pass membrane protein</topology>
    </subcellularLocation>
    <subcellularLocation>
        <location evidence="4">Basolateral cell membrane</location>
        <topology evidence="2">Multi-pass membrane protein</topology>
    </subcellularLocation>
    <text evidence="1">Interaction with isoform 2 of BSG is required for its localization to the plasma membrane.</text>
</comment>
<comment type="tissue specificity">
    <text evidence="3 4">Highly expressed in the lung, liver, kidney, and pancreas (PubMed:26376857). Expressed in eye lens.</text>
</comment>
<comment type="developmental stage">
    <text evidence="3">Expressed in lens at P1 and P7 (PubMed:21778275). The expression levels are higher than in adult lens (PubMed:21778275). Detected in the basolateral membrane of the lens epithelium, with strong staining at equatorial epithelium, and in differentiating secondary fiber cells at P1 (at protein level) (PubMed:21778275).</text>
</comment>
<comment type="similarity">
    <text evidence="6">Belongs to the major facilitator superfamily. Monocarboxylate porter (TC 2.A.1.13) family.</text>
</comment>
<proteinExistence type="evidence at protein level"/>
<accession>Q8BGC3</accession>
<accession>Q14CF9</accession>
<accession>Q14DR7</accession>
<feature type="chain" id="PRO_0000286676" description="Monocarboxylate transporter 12">
    <location>
        <begin position="1"/>
        <end position="486"/>
    </location>
</feature>
<feature type="topological domain" description="Cytoplasmic" evidence="2">
    <location>
        <begin position="1"/>
        <end position="9"/>
    </location>
</feature>
<feature type="transmembrane region" description="Helical" evidence="2">
    <location>
        <begin position="10"/>
        <end position="30"/>
    </location>
</feature>
<feature type="transmembrane region" description="Helical" evidence="2">
    <location>
        <begin position="58"/>
        <end position="78"/>
    </location>
</feature>
<feature type="transmembrane region" description="Helical" evidence="2">
    <location>
        <begin position="86"/>
        <end position="106"/>
    </location>
</feature>
<feature type="transmembrane region" description="Helical" evidence="2">
    <location>
        <begin position="115"/>
        <end position="135"/>
    </location>
</feature>
<feature type="transmembrane region" description="Helical" evidence="2">
    <location>
        <begin position="148"/>
        <end position="168"/>
    </location>
</feature>
<feature type="transmembrane region" description="Helical" evidence="2">
    <location>
        <begin position="177"/>
        <end position="197"/>
    </location>
</feature>
<feature type="transmembrane region" description="Helical" evidence="2">
    <location>
        <begin position="253"/>
        <end position="273"/>
    </location>
</feature>
<feature type="transmembrane region" description="Helical" evidence="2">
    <location>
        <begin position="289"/>
        <end position="309"/>
    </location>
</feature>
<feature type="transmembrane region" description="Helical" evidence="2">
    <location>
        <begin position="320"/>
        <end position="340"/>
    </location>
</feature>
<feature type="transmembrane region" description="Helical" evidence="2">
    <location>
        <begin position="353"/>
        <end position="373"/>
    </location>
</feature>
<feature type="transmembrane region" description="Helical" evidence="2">
    <location>
        <begin position="383"/>
        <end position="403"/>
    </location>
</feature>
<feature type="transmembrane region" description="Helical" evidence="2">
    <location>
        <begin position="410"/>
        <end position="430"/>
    </location>
</feature>
<feature type="topological domain" description="Cytoplasmic" evidence="2">
    <location>
        <begin position="431"/>
        <end position="486"/>
    </location>
</feature>
<feature type="sequence conflict" description="In Ref. 2; AAI13804/AAI11903." evidence="6" ref="2">
    <original>E</original>
    <variation>K</variation>
    <location>
        <position position="234"/>
    </location>
</feature>
<feature type="sequence conflict" description="In Ref. 2; AAI13804." evidence="6" ref="2">
    <original>S</original>
    <variation>C</variation>
    <location>
        <position position="293"/>
    </location>
</feature>
<organism>
    <name type="scientific">Mus musculus</name>
    <name type="common">Mouse</name>
    <dbReference type="NCBI Taxonomy" id="10090"/>
    <lineage>
        <taxon>Eukaryota</taxon>
        <taxon>Metazoa</taxon>
        <taxon>Chordata</taxon>
        <taxon>Craniata</taxon>
        <taxon>Vertebrata</taxon>
        <taxon>Euteleostomi</taxon>
        <taxon>Mammalia</taxon>
        <taxon>Eutheria</taxon>
        <taxon>Euarchontoglires</taxon>
        <taxon>Glires</taxon>
        <taxon>Rodentia</taxon>
        <taxon>Myomorpha</taxon>
        <taxon>Muroidea</taxon>
        <taxon>Muridae</taxon>
        <taxon>Murinae</taxon>
        <taxon>Mus</taxon>
        <taxon>Mus</taxon>
    </lineage>
</organism>